<reference key="1">
    <citation type="journal article" date="2009" name="J. Bacteriol.">
        <title>Complete genome sequence of Macrococcus caseolyticus strain JCSCS5402, reflecting the ancestral genome of the human-pathogenic staphylococci.</title>
        <authorList>
            <person name="Baba T."/>
            <person name="Kuwahara-Arai K."/>
            <person name="Uchiyama I."/>
            <person name="Takeuchi F."/>
            <person name="Ito T."/>
            <person name="Hiramatsu K."/>
        </authorList>
    </citation>
    <scope>NUCLEOTIDE SEQUENCE [LARGE SCALE GENOMIC DNA]</scope>
    <source>
        <strain>JCSC5402</strain>
    </source>
</reference>
<proteinExistence type="inferred from homology"/>
<feature type="chain" id="PRO_1000199140" description="Histidine--tRNA ligase">
    <location>
        <begin position="1"/>
        <end position="420"/>
    </location>
</feature>
<sequence>MMINIPRGTQDILPAETAKWRYVESKLHNIAANYNYKEIRTPMFESTDLFARGVGGSTDIVQKEMYTFKDKGDRSLTLRPEGTAAVVRSYIENKMNGDANQPVKLYYNGPMFRYERKQKGRYRQFVQFGVEAIGSENPAIDAEVIHMVYNIYKSFGLKHIKIVLNSIGDMDSREEYKQALIEHFEPHINNFCNDCKNRLHTNPMRILDCKVDHEQPTVKTAPKITEYLNDYSKNYYEEVKQYLDLLNIPYIEDASLVRGLDYYTHTAFEVMSEAEGFGAITTLCGGGRYNGLLEMLDGPKETGIGFALSIERLLLAIEAEDIQLDVEESVDIFVVTMPETVKEAVKIVAELRNAGIRCDMDYLGRKMKGQMKQADRIHATYTVVLGSNEIETNKIQIKAMQTGESETIKLQDIASYIKGE</sequence>
<dbReference type="EC" id="6.1.1.21" evidence="1"/>
<dbReference type="EMBL" id="AP009484">
    <property type="protein sequence ID" value="BAH17975.1"/>
    <property type="molecule type" value="Genomic_DNA"/>
</dbReference>
<dbReference type="SMR" id="B9E707"/>
<dbReference type="STRING" id="458233.MCCL_1268"/>
<dbReference type="KEGG" id="mcl:MCCL_1268"/>
<dbReference type="eggNOG" id="COG0124">
    <property type="taxonomic scope" value="Bacteria"/>
</dbReference>
<dbReference type="HOGENOM" id="CLU_025113_1_1_9"/>
<dbReference type="OrthoDB" id="9800814at2"/>
<dbReference type="Proteomes" id="UP000001383">
    <property type="component" value="Chromosome"/>
</dbReference>
<dbReference type="GO" id="GO:0005737">
    <property type="term" value="C:cytoplasm"/>
    <property type="evidence" value="ECO:0007669"/>
    <property type="project" value="UniProtKB-SubCell"/>
</dbReference>
<dbReference type="GO" id="GO:0005524">
    <property type="term" value="F:ATP binding"/>
    <property type="evidence" value="ECO:0007669"/>
    <property type="project" value="UniProtKB-UniRule"/>
</dbReference>
<dbReference type="GO" id="GO:0140096">
    <property type="term" value="F:catalytic activity, acting on a protein"/>
    <property type="evidence" value="ECO:0007669"/>
    <property type="project" value="UniProtKB-ARBA"/>
</dbReference>
<dbReference type="GO" id="GO:0004821">
    <property type="term" value="F:histidine-tRNA ligase activity"/>
    <property type="evidence" value="ECO:0007669"/>
    <property type="project" value="UniProtKB-UniRule"/>
</dbReference>
<dbReference type="GO" id="GO:0016740">
    <property type="term" value="F:transferase activity"/>
    <property type="evidence" value="ECO:0007669"/>
    <property type="project" value="UniProtKB-ARBA"/>
</dbReference>
<dbReference type="GO" id="GO:0006427">
    <property type="term" value="P:histidyl-tRNA aminoacylation"/>
    <property type="evidence" value="ECO:0007669"/>
    <property type="project" value="UniProtKB-UniRule"/>
</dbReference>
<dbReference type="CDD" id="cd00773">
    <property type="entry name" value="HisRS-like_core"/>
    <property type="match status" value="1"/>
</dbReference>
<dbReference type="CDD" id="cd00859">
    <property type="entry name" value="HisRS_anticodon"/>
    <property type="match status" value="1"/>
</dbReference>
<dbReference type="FunFam" id="3.30.930.10:FF:000005">
    <property type="entry name" value="Histidine--tRNA ligase"/>
    <property type="match status" value="1"/>
</dbReference>
<dbReference type="Gene3D" id="3.40.50.800">
    <property type="entry name" value="Anticodon-binding domain"/>
    <property type="match status" value="1"/>
</dbReference>
<dbReference type="Gene3D" id="3.30.930.10">
    <property type="entry name" value="Bira Bifunctional Protein, Domain 2"/>
    <property type="match status" value="1"/>
</dbReference>
<dbReference type="HAMAP" id="MF_00127">
    <property type="entry name" value="His_tRNA_synth"/>
    <property type="match status" value="1"/>
</dbReference>
<dbReference type="InterPro" id="IPR006195">
    <property type="entry name" value="aa-tRNA-synth_II"/>
</dbReference>
<dbReference type="InterPro" id="IPR045864">
    <property type="entry name" value="aa-tRNA-synth_II/BPL/LPL"/>
</dbReference>
<dbReference type="InterPro" id="IPR004154">
    <property type="entry name" value="Anticodon-bd"/>
</dbReference>
<dbReference type="InterPro" id="IPR036621">
    <property type="entry name" value="Anticodon-bd_dom_sf"/>
</dbReference>
<dbReference type="InterPro" id="IPR015807">
    <property type="entry name" value="His-tRNA-ligase"/>
</dbReference>
<dbReference type="InterPro" id="IPR041715">
    <property type="entry name" value="HisRS-like_core"/>
</dbReference>
<dbReference type="InterPro" id="IPR004516">
    <property type="entry name" value="HisRS/HisZ"/>
</dbReference>
<dbReference type="InterPro" id="IPR033656">
    <property type="entry name" value="HisRS_anticodon"/>
</dbReference>
<dbReference type="NCBIfam" id="TIGR00442">
    <property type="entry name" value="hisS"/>
    <property type="match status" value="1"/>
</dbReference>
<dbReference type="PANTHER" id="PTHR43707:SF1">
    <property type="entry name" value="HISTIDINE--TRNA LIGASE, MITOCHONDRIAL-RELATED"/>
    <property type="match status" value="1"/>
</dbReference>
<dbReference type="PANTHER" id="PTHR43707">
    <property type="entry name" value="HISTIDYL-TRNA SYNTHETASE"/>
    <property type="match status" value="1"/>
</dbReference>
<dbReference type="Pfam" id="PF03129">
    <property type="entry name" value="HGTP_anticodon"/>
    <property type="match status" value="1"/>
</dbReference>
<dbReference type="Pfam" id="PF13393">
    <property type="entry name" value="tRNA-synt_His"/>
    <property type="match status" value="1"/>
</dbReference>
<dbReference type="PIRSF" id="PIRSF001549">
    <property type="entry name" value="His-tRNA_synth"/>
    <property type="match status" value="1"/>
</dbReference>
<dbReference type="SUPFAM" id="SSF52954">
    <property type="entry name" value="Class II aaRS ABD-related"/>
    <property type="match status" value="1"/>
</dbReference>
<dbReference type="SUPFAM" id="SSF55681">
    <property type="entry name" value="Class II aaRS and biotin synthetases"/>
    <property type="match status" value="1"/>
</dbReference>
<dbReference type="PROSITE" id="PS50862">
    <property type="entry name" value="AA_TRNA_LIGASE_II"/>
    <property type="match status" value="1"/>
</dbReference>
<gene>
    <name evidence="1" type="primary">hisS</name>
    <name type="ordered locus">MCCL_1268</name>
</gene>
<name>SYH_MACCJ</name>
<evidence type="ECO:0000255" key="1">
    <source>
        <dbReference type="HAMAP-Rule" id="MF_00127"/>
    </source>
</evidence>
<organism>
    <name type="scientific">Macrococcus caseolyticus (strain JCSC5402)</name>
    <name type="common">Macrococcoides caseolyticum</name>
    <dbReference type="NCBI Taxonomy" id="458233"/>
    <lineage>
        <taxon>Bacteria</taxon>
        <taxon>Bacillati</taxon>
        <taxon>Bacillota</taxon>
        <taxon>Bacilli</taxon>
        <taxon>Bacillales</taxon>
        <taxon>Staphylococcaceae</taxon>
        <taxon>Macrococcoides</taxon>
    </lineage>
</organism>
<accession>B9E707</accession>
<comment type="catalytic activity">
    <reaction evidence="1">
        <text>tRNA(His) + L-histidine + ATP = L-histidyl-tRNA(His) + AMP + diphosphate + H(+)</text>
        <dbReference type="Rhea" id="RHEA:17313"/>
        <dbReference type="Rhea" id="RHEA-COMP:9665"/>
        <dbReference type="Rhea" id="RHEA-COMP:9689"/>
        <dbReference type="ChEBI" id="CHEBI:15378"/>
        <dbReference type="ChEBI" id="CHEBI:30616"/>
        <dbReference type="ChEBI" id="CHEBI:33019"/>
        <dbReference type="ChEBI" id="CHEBI:57595"/>
        <dbReference type="ChEBI" id="CHEBI:78442"/>
        <dbReference type="ChEBI" id="CHEBI:78527"/>
        <dbReference type="ChEBI" id="CHEBI:456215"/>
        <dbReference type="EC" id="6.1.1.21"/>
    </reaction>
</comment>
<comment type="subunit">
    <text evidence="1">Homodimer.</text>
</comment>
<comment type="subcellular location">
    <subcellularLocation>
        <location evidence="1">Cytoplasm</location>
    </subcellularLocation>
</comment>
<comment type="similarity">
    <text evidence="1">Belongs to the class-II aminoacyl-tRNA synthetase family.</text>
</comment>
<protein>
    <recommendedName>
        <fullName evidence="1">Histidine--tRNA ligase</fullName>
        <ecNumber evidence="1">6.1.1.21</ecNumber>
    </recommendedName>
    <alternativeName>
        <fullName evidence="1">Histidyl-tRNA synthetase</fullName>
        <shortName evidence="1">HisRS</shortName>
    </alternativeName>
</protein>
<keyword id="KW-0030">Aminoacyl-tRNA synthetase</keyword>
<keyword id="KW-0067">ATP-binding</keyword>
<keyword id="KW-0963">Cytoplasm</keyword>
<keyword id="KW-0436">Ligase</keyword>
<keyword id="KW-0547">Nucleotide-binding</keyword>
<keyword id="KW-0648">Protein biosynthesis</keyword>
<keyword id="KW-1185">Reference proteome</keyword>